<proteinExistence type="evidence at protein level"/>
<sequence>MVKLFGKSKKKEESPQSIDIAFQSILDEIGVVETEKKHLMATMDTVRKQQLIQSYSSKKFSKNEFGNKSKKKSIITQSPHYFVDCLKNDPSKEVLTSLRVRLGNQPLKWLKEFLSLDGVSLLIKVLILNEIKQVKNQEDIYKIAQCLHSLKLIMNTKFGLESVIKQPTNIHSISLVMDTPHLKTRIMVIELLAALCVVNSKGLPLVLSAMDNYREVKREKKPFIHLFQGLKNPSGSLQATTFALINTLISSSQSVEERQKIRNQFKKLGITKVIEELEPEYANNPDLATQKDLYEQECRWDEQEQIENARGDISDENPEALVKAILDRTAGGPLYSSFTSILRLLANSITDQTKDQSLSNYLFVEKVIGKMNNGESYLDDIGTFFGGGGGGDGSLDIAHVSGEKAVLIQKEIEDLKKQKKRDQDKLAEKDKLLTKLAKRMRKMEEAIKLGKGLEYLNNQIEIESPPDSSTSTPQETTPGGTKVPLKTSPVTKADLKHKLSTFTTAKAPNGVSDFLSGLDTTNQQGSTDASQTEAGSGDGIPLPPGAPPPPPPPGGKLAPSTPQLCSRPPSIKMKSYQWTRYRTRNVTNTFWKNVNLTKYNDCLPHEQIEGLFGAAIFEKKEKELKKGSEVTVIDTKRAQNIGILLSRFKNVTHDAIYDAIYSLDESILDLETINQFIKYIPSKEEIDCIIAFKQQQEQLPEEERMKLGKSEIFIDKISTIPRLEQRIQALHFKLNFPDKLYHAKPDIRKFNEAFVQLQNNNIFAIMELILSIGNFINFGTNRGNASGFKIDSINKMADTKSNIREKYTLVHYLIELLESTQPELLKVFDEIPSVVDAATLSFNQSSSEIKLLRAGLIKLEKEIFVRQPKSVEPKPDDETINNNGEDDINNTSSDEKTEGQQQRQGEEEENDESESTGNSFADSLKKKKSQVNTNSTSDSKQSLEPLKDDDPLKLKLSEFLLASKTELDDTETLIAETEVLFKSICKFFGEDSTKIQPEEFLAIFKKFNDKFIMSKKDLEIEKSIKDKSTQRKNEKERKEMEIKKSKLEMIHSKLKKIGSPSSSNRILASNESSPTSSTSSVVHQHDDEDEETIKEYINNPSPSQQSNSSEEEGMMDDLLNLIRDGNFRELRRMNLQQKKPVRTKRVIAKQPTRPQALDTPSSTYSSISSIYDAEPLDMSDQEDEDEEEEEDEEEEEEEEEGDDDNDNDEEEGEN</sequence>
<reference key="1">
    <citation type="journal article" date="2004" name="Nucleic Acids Res.">
        <title>A rapid and efficient method to generate multiple gene disruptions in Dictyostelium discoideum using a single selectable marker and the Cre-loxP system.</title>
        <authorList>
            <person name="Faix J."/>
            <person name="Kreppel L."/>
            <person name="Shaulsky G."/>
            <person name="Schleicher M."/>
            <person name="Kimmel A.R."/>
        </authorList>
    </citation>
    <scope>NUCLEOTIDE SEQUENCE [MRNA]</scope>
    <source>
        <strain>AX2</strain>
    </source>
</reference>
<reference key="2">
    <citation type="journal article" date="2005" name="Nature">
        <title>The genome of the social amoeba Dictyostelium discoideum.</title>
        <authorList>
            <person name="Eichinger L."/>
            <person name="Pachebat J.A."/>
            <person name="Gloeckner G."/>
            <person name="Rajandream M.A."/>
            <person name="Sucgang R."/>
            <person name="Berriman M."/>
            <person name="Song J."/>
            <person name="Olsen R."/>
            <person name="Szafranski K."/>
            <person name="Xu Q."/>
            <person name="Tunggal B."/>
            <person name="Kummerfeld S."/>
            <person name="Madera M."/>
            <person name="Konfortov B.A."/>
            <person name="Rivero F."/>
            <person name="Bankier A.T."/>
            <person name="Lehmann R."/>
            <person name="Hamlin N."/>
            <person name="Davies R."/>
            <person name="Gaudet P."/>
            <person name="Fey P."/>
            <person name="Pilcher K."/>
            <person name="Chen G."/>
            <person name="Saunders D."/>
            <person name="Sodergren E.J."/>
            <person name="Davis P."/>
            <person name="Kerhornou A."/>
            <person name="Nie X."/>
            <person name="Hall N."/>
            <person name="Anjard C."/>
            <person name="Hemphill L."/>
            <person name="Bason N."/>
            <person name="Farbrother P."/>
            <person name="Desany B."/>
            <person name="Just E."/>
            <person name="Morio T."/>
            <person name="Rost R."/>
            <person name="Churcher C.M."/>
            <person name="Cooper J."/>
            <person name="Haydock S."/>
            <person name="van Driessche N."/>
            <person name="Cronin A."/>
            <person name="Goodhead I."/>
            <person name="Muzny D.M."/>
            <person name="Mourier T."/>
            <person name="Pain A."/>
            <person name="Lu M."/>
            <person name="Harper D."/>
            <person name="Lindsay R."/>
            <person name="Hauser H."/>
            <person name="James K.D."/>
            <person name="Quiles M."/>
            <person name="Madan Babu M."/>
            <person name="Saito T."/>
            <person name="Buchrieser C."/>
            <person name="Wardroper A."/>
            <person name="Felder M."/>
            <person name="Thangavelu M."/>
            <person name="Johnson D."/>
            <person name="Knights A."/>
            <person name="Loulseged H."/>
            <person name="Mungall K.L."/>
            <person name="Oliver K."/>
            <person name="Price C."/>
            <person name="Quail M.A."/>
            <person name="Urushihara H."/>
            <person name="Hernandez J."/>
            <person name="Rabbinowitsch E."/>
            <person name="Steffen D."/>
            <person name="Sanders M."/>
            <person name="Ma J."/>
            <person name="Kohara Y."/>
            <person name="Sharp S."/>
            <person name="Simmonds M.N."/>
            <person name="Spiegler S."/>
            <person name="Tivey A."/>
            <person name="Sugano S."/>
            <person name="White B."/>
            <person name="Walker D."/>
            <person name="Woodward J.R."/>
            <person name="Winckler T."/>
            <person name="Tanaka Y."/>
            <person name="Shaulsky G."/>
            <person name="Schleicher M."/>
            <person name="Weinstock G.M."/>
            <person name="Rosenthal A."/>
            <person name="Cox E.C."/>
            <person name="Chisholm R.L."/>
            <person name="Gibbs R.A."/>
            <person name="Loomis W.F."/>
            <person name="Platzer M."/>
            <person name="Kay R.R."/>
            <person name="Williams J.G."/>
            <person name="Dear P.H."/>
            <person name="Noegel A.A."/>
            <person name="Barrell B.G."/>
            <person name="Kuspa A."/>
        </authorList>
    </citation>
    <scope>NUCLEOTIDE SEQUENCE [LARGE SCALE GENOMIC DNA]</scope>
    <source>
        <strain>AX4</strain>
    </source>
</reference>
<reference key="3">
    <citation type="journal article" date="2004" name="Protoplasma">
        <title>Evolutionarily conserved modules in actin nucleation: lessons from Dictyostelium discoideum and plants. Review article.</title>
        <authorList>
            <person name="Cvrckova F."/>
            <person name="Rivero F."/>
            <person name="Bavlnka B."/>
        </authorList>
    </citation>
    <scope>NOMENCLATURE</scope>
</reference>
<reference key="4">
    <citation type="journal article" date="2005" name="BMC Genomics">
        <title>A comparative sequence analysis reveals a common GBD/FH3-FH1-FH2-DAD architecture in formins from Dictyostelium, fungi and metazoa.</title>
        <authorList>
            <person name="Rivero F."/>
            <person name="Muramoto T."/>
            <person name="Meyer A.-K."/>
            <person name="Urushihara H."/>
            <person name="Uyeda T.Q.P."/>
            <person name="Kitayama C."/>
        </authorList>
    </citation>
    <scope>DEVELOPMENTAL STAGE</scope>
</reference>
<reference key="5">
    <citation type="journal article" date="2006" name="Eur. J. Cell Biol.">
        <title>Rho GTPase signaling in Dictyostelium discoideum: insights from the genome.</title>
        <authorList>
            <person name="Vlahou G."/>
            <person name="Rivero F."/>
        </authorList>
    </citation>
    <scope>INTERACTION WITH RHO GTPASE</scope>
</reference>
<dbReference type="EMBL" id="AJ812734">
    <property type="protein sequence ID" value="CAH25332.1"/>
    <property type="molecule type" value="mRNA"/>
</dbReference>
<dbReference type="EMBL" id="AAFI02000046">
    <property type="protein sequence ID" value="EAL66328.1"/>
    <property type="molecule type" value="Genomic_DNA"/>
</dbReference>
<dbReference type="RefSeq" id="XP_640306.1">
    <property type="nucleotide sequence ID" value="XM_635214.1"/>
</dbReference>
<dbReference type="SMR" id="Q5TJ55"/>
<dbReference type="FunCoup" id="Q5TJ55">
    <property type="interactions" value="2"/>
</dbReference>
<dbReference type="PaxDb" id="44689-DDB0231188"/>
<dbReference type="EnsemblProtists" id="EAL66328">
    <property type="protein sequence ID" value="EAL66328"/>
    <property type="gene ID" value="DDB_G0282245"/>
</dbReference>
<dbReference type="GeneID" id="8623482"/>
<dbReference type="KEGG" id="ddi:DDB_G0282245"/>
<dbReference type="dictyBase" id="DDB_G0282245">
    <property type="gene designation" value="forD"/>
</dbReference>
<dbReference type="VEuPathDB" id="AmoebaDB:DDB_G0282245"/>
<dbReference type="eggNOG" id="KOG1922">
    <property type="taxonomic scope" value="Eukaryota"/>
</dbReference>
<dbReference type="HOGENOM" id="CLU_269415_0_0_1"/>
<dbReference type="InParanoid" id="Q5TJ55"/>
<dbReference type="OMA" id="TPERCSR"/>
<dbReference type="PhylomeDB" id="Q5TJ55"/>
<dbReference type="PRO" id="PR:Q5TJ55"/>
<dbReference type="Proteomes" id="UP000002195">
    <property type="component" value="Chromosome 3"/>
</dbReference>
<dbReference type="GO" id="GO:0015629">
    <property type="term" value="C:actin cytoskeleton"/>
    <property type="evidence" value="ECO:0000318"/>
    <property type="project" value="GO_Central"/>
</dbReference>
<dbReference type="GO" id="GO:0051015">
    <property type="term" value="F:actin filament binding"/>
    <property type="evidence" value="ECO:0000318"/>
    <property type="project" value="GO_Central"/>
</dbReference>
<dbReference type="GO" id="GO:0005522">
    <property type="term" value="F:profilin binding"/>
    <property type="evidence" value="ECO:0000250"/>
    <property type="project" value="dictyBase"/>
</dbReference>
<dbReference type="GO" id="GO:0031267">
    <property type="term" value="F:small GTPase binding"/>
    <property type="evidence" value="ECO:0007669"/>
    <property type="project" value="InterPro"/>
</dbReference>
<dbReference type="GO" id="GO:0070060">
    <property type="term" value="P:'de novo' actin filament nucleation"/>
    <property type="evidence" value="ECO:0000318"/>
    <property type="project" value="GO_Central"/>
</dbReference>
<dbReference type="GO" id="GO:0030041">
    <property type="term" value="P:actin filament polymerization"/>
    <property type="evidence" value="ECO:0000318"/>
    <property type="project" value="GO_Central"/>
</dbReference>
<dbReference type="FunFam" id="1.25.10.10:FF:001515">
    <property type="entry name" value="Formin-D"/>
    <property type="match status" value="1"/>
</dbReference>
<dbReference type="Gene3D" id="1.20.58.2220">
    <property type="entry name" value="Formin, FH2 domain"/>
    <property type="match status" value="1"/>
</dbReference>
<dbReference type="Gene3D" id="1.25.10.10">
    <property type="entry name" value="Leucine-rich Repeat Variant"/>
    <property type="match status" value="1"/>
</dbReference>
<dbReference type="InterPro" id="IPR011989">
    <property type="entry name" value="ARM-like"/>
</dbReference>
<dbReference type="InterPro" id="IPR016024">
    <property type="entry name" value="ARM-type_fold"/>
</dbReference>
<dbReference type="InterPro" id="IPR015425">
    <property type="entry name" value="FH2_Formin"/>
</dbReference>
<dbReference type="InterPro" id="IPR042201">
    <property type="entry name" value="FH2_Formin_sf"/>
</dbReference>
<dbReference type="InterPro" id="IPR010472">
    <property type="entry name" value="FH3_dom"/>
</dbReference>
<dbReference type="InterPro" id="IPR051425">
    <property type="entry name" value="Formin_Homology"/>
</dbReference>
<dbReference type="InterPro" id="IPR014768">
    <property type="entry name" value="GBD/FH3_dom"/>
</dbReference>
<dbReference type="InterPro" id="IPR010473">
    <property type="entry name" value="GTPase-bd"/>
</dbReference>
<dbReference type="PANTHER" id="PTHR45725:SF1">
    <property type="entry name" value="DISHEVELLED ASSOCIATED ACTIVATOR OF MORPHOGENESIS, ISOFORM D"/>
    <property type="match status" value="1"/>
</dbReference>
<dbReference type="PANTHER" id="PTHR45725">
    <property type="entry name" value="FORMIN HOMOLOGY 2 FAMILY MEMBER"/>
    <property type="match status" value="1"/>
</dbReference>
<dbReference type="Pfam" id="PF06367">
    <property type="entry name" value="Drf_FH3"/>
    <property type="match status" value="1"/>
</dbReference>
<dbReference type="Pfam" id="PF06371">
    <property type="entry name" value="Drf_GBD"/>
    <property type="match status" value="1"/>
</dbReference>
<dbReference type="Pfam" id="PF02181">
    <property type="entry name" value="FH2"/>
    <property type="match status" value="1"/>
</dbReference>
<dbReference type="SMART" id="SM01139">
    <property type="entry name" value="Drf_FH3"/>
    <property type="match status" value="1"/>
</dbReference>
<dbReference type="SMART" id="SM01140">
    <property type="entry name" value="Drf_GBD"/>
    <property type="match status" value="1"/>
</dbReference>
<dbReference type="SMART" id="SM00498">
    <property type="entry name" value="FH2"/>
    <property type="match status" value="1"/>
</dbReference>
<dbReference type="SUPFAM" id="SSF48371">
    <property type="entry name" value="ARM repeat"/>
    <property type="match status" value="1"/>
</dbReference>
<dbReference type="SUPFAM" id="SSF101447">
    <property type="entry name" value="Formin homology 2 domain (FH2 domain)"/>
    <property type="match status" value="1"/>
</dbReference>
<dbReference type="PROSITE" id="PS51444">
    <property type="entry name" value="FH2"/>
    <property type="match status" value="1"/>
</dbReference>
<dbReference type="PROSITE" id="PS51232">
    <property type="entry name" value="GBD_FH3"/>
    <property type="match status" value="1"/>
</dbReference>
<keyword id="KW-0009">Actin-binding</keyword>
<keyword id="KW-0175">Coiled coil</keyword>
<keyword id="KW-1185">Reference proteome</keyword>
<protein>
    <recommendedName>
        <fullName>Formin-D</fullName>
    </recommendedName>
    <alternativeName>
        <fullName>Diaphanous-related formin dia4</fullName>
    </alternativeName>
</protein>
<name>FORD_DICDI</name>
<gene>
    <name type="primary">forD</name>
    <name type="synonym">drf4</name>
    <name type="ORF">DDB_G0282245</name>
</gene>
<evidence type="ECO:0000250" key="1"/>
<evidence type="ECO:0000255" key="2"/>
<evidence type="ECO:0000255" key="3">
    <source>
        <dbReference type="PROSITE-ProRule" id="PRU00579"/>
    </source>
</evidence>
<evidence type="ECO:0000255" key="4">
    <source>
        <dbReference type="PROSITE-ProRule" id="PRU00774"/>
    </source>
</evidence>
<evidence type="ECO:0000256" key="5">
    <source>
        <dbReference type="SAM" id="MobiDB-lite"/>
    </source>
</evidence>
<evidence type="ECO:0000269" key="6">
    <source>
    </source>
</evidence>
<evidence type="ECO:0000269" key="7">
    <source>
    </source>
</evidence>
<evidence type="ECO:0000305" key="8"/>
<accession>Q5TJ55</accession>
<accession>Q54SS9</accession>
<organism>
    <name type="scientific">Dictyostelium discoideum</name>
    <name type="common">Social amoeba</name>
    <dbReference type="NCBI Taxonomy" id="44689"/>
    <lineage>
        <taxon>Eukaryota</taxon>
        <taxon>Amoebozoa</taxon>
        <taxon>Evosea</taxon>
        <taxon>Eumycetozoa</taxon>
        <taxon>Dictyostelia</taxon>
        <taxon>Dictyosteliales</taxon>
        <taxon>Dictyosteliaceae</taxon>
        <taxon>Dictyostelium</taxon>
    </lineage>
</organism>
<comment type="function">
    <text evidence="1">Formins play an important role in the nucleation of actin and the formation of linear actin filaments.</text>
</comment>
<comment type="subunit">
    <text evidence="7">Interacts (via GBD/FH3 domain) with activated Rho-GTPases.</text>
</comment>
<comment type="developmental stage">
    <text evidence="6">Expression increases during transition to multi-cellular stages, and levels remain constantly high throughout the rest of development.</text>
</comment>
<comment type="domain">
    <text evidence="1">The DAD domain regulates activation via by an autoinhibitory interaction with the GBD/FH3 domain. This autoinhibition is released upon competitive binding of an activated GTPase. The release of DAD allows the FH2 domain to then nucleate and elongate nonbranched actin filaments (By similarity).</text>
</comment>
<comment type="similarity">
    <text evidence="8">Belongs to the formin homology family. Diaphanous subfamily.</text>
</comment>
<feature type="chain" id="PRO_0000363916" description="Formin-D">
    <location>
        <begin position="1"/>
        <end position="1214"/>
    </location>
</feature>
<feature type="domain" description="GBD/FH3" evidence="3">
    <location>
        <begin position="10"/>
        <end position="379"/>
    </location>
</feature>
<feature type="domain" description="FH1">
    <location>
        <begin position="457"/>
        <end position="544"/>
    </location>
</feature>
<feature type="domain" description="FH2" evidence="4">
    <location>
        <begin position="562"/>
        <end position="1037"/>
    </location>
</feature>
<feature type="domain" description="DAD">
    <location>
        <begin position="1065"/>
        <end position="1095"/>
    </location>
</feature>
<feature type="region of interest" description="Disordered" evidence="5">
    <location>
        <begin position="462"/>
        <end position="490"/>
    </location>
</feature>
<feature type="region of interest" description="Disordered" evidence="5">
    <location>
        <begin position="507"/>
        <end position="569"/>
    </location>
</feature>
<feature type="region of interest" description="Disordered" evidence="5">
    <location>
        <begin position="868"/>
        <end position="948"/>
    </location>
</feature>
<feature type="region of interest" description="Disordered" evidence="5">
    <location>
        <begin position="1026"/>
        <end position="1045"/>
    </location>
</feature>
<feature type="region of interest" description="Disordered" evidence="5">
    <location>
        <begin position="1054"/>
        <end position="1089"/>
    </location>
</feature>
<feature type="region of interest" description="Disordered" evidence="5">
    <location>
        <begin position="1133"/>
        <end position="1214"/>
    </location>
</feature>
<feature type="coiled-coil region" evidence="2">
    <location>
        <begin position="401"/>
        <end position="448"/>
    </location>
</feature>
<feature type="coiled-coil region" evidence="2">
    <location>
        <begin position="1019"/>
        <end position="1056"/>
    </location>
</feature>
<feature type="coiled-coil region" evidence="2">
    <location>
        <begin position="1176"/>
        <end position="1207"/>
    </location>
</feature>
<feature type="compositionally biased region" description="Polar residues" evidence="5">
    <location>
        <begin position="462"/>
        <end position="479"/>
    </location>
</feature>
<feature type="compositionally biased region" description="Polar residues" evidence="5">
    <location>
        <begin position="518"/>
        <end position="534"/>
    </location>
</feature>
<feature type="compositionally biased region" description="Pro residues" evidence="5">
    <location>
        <begin position="541"/>
        <end position="554"/>
    </location>
</feature>
<feature type="compositionally biased region" description="Basic and acidic residues" evidence="5">
    <location>
        <begin position="868"/>
        <end position="877"/>
    </location>
</feature>
<feature type="compositionally biased region" description="Polar residues" evidence="5">
    <location>
        <begin position="930"/>
        <end position="940"/>
    </location>
</feature>
<feature type="compositionally biased region" description="Polar residues" evidence="5">
    <location>
        <begin position="1059"/>
        <end position="1071"/>
    </location>
</feature>
<feature type="compositionally biased region" description="Low complexity" evidence="5">
    <location>
        <begin position="1161"/>
        <end position="1171"/>
    </location>
</feature>
<feature type="compositionally biased region" description="Acidic residues" evidence="5">
    <location>
        <begin position="1174"/>
        <end position="1214"/>
    </location>
</feature>